<keyword id="KW-0227">DNA damage</keyword>
<keyword id="KW-0234">DNA repair</keyword>
<keyword id="KW-0269">Exonuclease</keyword>
<keyword id="KW-0378">Hydrolase</keyword>
<keyword id="KW-0540">Nuclease</keyword>
<keyword id="KW-0539">Nucleus</keyword>
<keyword id="KW-1185">Reference proteome</keyword>
<proteinExistence type="evidence at protein level"/>
<name>MRT2_CAEEL</name>
<dbReference type="EC" id="3.1.11.2" evidence="1"/>
<dbReference type="EMBL" id="AF076843">
    <property type="protein sequence ID" value="AAC95525.1"/>
    <property type="molecule type" value="mRNA"/>
</dbReference>
<dbReference type="EMBL" id="BX284603">
    <property type="protein sequence ID" value="CAB63359.2"/>
    <property type="molecule type" value="Genomic_DNA"/>
</dbReference>
<dbReference type="PIR" id="T43313">
    <property type="entry name" value="T43313"/>
</dbReference>
<dbReference type="RefSeq" id="NP_499521.1">
    <property type="nucleotide sequence ID" value="NM_067120.5"/>
</dbReference>
<dbReference type="SMR" id="G5EC44"/>
<dbReference type="ComplexPortal" id="CPX-1615">
    <property type="entry name" value="Checkpoint clamp complex"/>
</dbReference>
<dbReference type="FunCoup" id="G5EC44">
    <property type="interactions" value="2895"/>
</dbReference>
<dbReference type="IntAct" id="G5EC44">
    <property type="interactions" value="27"/>
</dbReference>
<dbReference type="MINT" id="G5EC44"/>
<dbReference type="STRING" id="6239.Y41C4A.14.1"/>
<dbReference type="PaxDb" id="6239-Y41C4A.14"/>
<dbReference type="EnsemblMetazoa" id="Y41C4A.14.1">
    <property type="protein sequence ID" value="Y41C4A.14.1"/>
    <property type="gene ID" value="WBGene00003417"/>
</dbReference>
<dbReference type="EnsemblMetazoa" id="Y41C4A.14.2">
    <property type="protein sequence ID" value="Y41C4A.14.2"/>
    <property type="gene ID" value="WBGene00003417"/>
</dbReference>
<dbReference type="GeneID" id="176608"/>
<dbReference type="KEGG" id="cel:CELE_Y41C4A.14"/>
<dbReference type="AGR" id="WB:WBGene00003417"/>
<dbReference type="CTD" id="176608"/>
<dbReference type="WormBase" id="Y41C4A.14">
    <property type="protein sequence ID" value="CE29376"/>
    <property type="gene ID" value="WBGene00003417"/>
    <property type="gene designation" value="mrt-2"/>
</dbReference>
<dbReference type="eggNOG" id="KOG3194">
    <property type="taxonomic scope" value="Eukaryota"/>
</dbReference>
<dbReference type="GeneTree" id="ENSGT00500000044913"/>
<dbReference type="HOGENOM" id="CLU_035332_2_1_1"/>
<dbReference type="InParanoid" id="G5EC44"/>
<dbReference type="OMA" id="WSQAYKF"/>
<dbReference type="OrthoDB" id="337581at2759"/>
<dbReference type="PhylomeDB" id="G5EC44"/>
<dbReference type="Reactome" id="R-CEL-176187">
    <property type="pathway name" value="Activation of ATR in response to replication stress"/>
</dbReference>
<dbReference type="Reactome" id="R-CEL-5693607">
    <property type="pathway name" value="Processing of DNA double-strand break ends"/>
</dbReference>
<dbReference type="SignaLink" id="G5EC44"/>
<dbReference type="PRO" id="PR:G5EC44"/>
<dbReference type="Proteomes" id="UP000001940">
    <property type="component" value="Chromosome III"/>
</dbReference>
<dbReference type="Bgee" id="WBGene00003417">
    <property type="expression patterns" value="Expressed in germ line (C elegans) and 4 other cell types or tissues"/>
</dbReference>
<dbReference type="GO" id="GO:0030896">
    <property type="term" value="C:checkpoint clamp complex"/>
    <property type="evidence" value="ECO:0000318"/>
    <property type="project" value="GO_Central"/>
</dbReference>
<dbReference type="GO" id="GO:0005634">
    <property type="term" value="C:nucleus"/>
    <property type="evidence" value="ECO:0000303"/>
    <property type="project" value="ComplexPortal"/>
</dbReference>
<dbReference type="GO" id="GO:0003684">
    <property type="term" value="F:damaged DNA binding"/>
    <property type="evidence" value="ECO:0000250"/>
    <property type="project" value="WormBase"/>
</dbReference>
<dbReference type="GO" id="GO:0008311">
    <property type="term" value="F:double-stranded DNA 3'-5' DNA exonuclease activity"/>
    <property type="evidence" value="ECO:0007669"/>
    <property type="project" value="UniProtKB-EC"/>
</dbReference>
<dbReference type="GO" id="GO:0000077">
    <property type="term" value="P:DNA damage checkpoint signaling"/>
    <property type="evidence" value="ECO:0000315"/>
    <property type="project" value="WormBase"/>
</dbReference>
<dbReference type="GO" id="GO:0006281">
    <property type="term" value="P:DNA repair"/>
    <property type="evidence" value="ECO:0000318"/>
    <property type="project" value="GO_Central"/>
</dbReference>
<dbReference type="GO" id="GO:0008630">
    <property type="term" value="P:intrinsic apoptotic signaling pathway in response to DNA damage"/>
    <property type="evidence" value="ECO:0000315"/>
    <property type="project" value="WormBase"/>
</dbReference>
<dbReference type="GO" id="GO:0006289">
    <property type="term" value="P:nucleotide-excision repair"/>
    <property type="evidence" value="ECO:0000315"/>
    <property type="project" value="WormBase"/>
</dbReference>
<dbReference type="GO" id="GO:0000723">
    <property type="term" value="P:telomere maintenance"/>
    <property type="evidence" value="ECO:0000315"/>
    <property type="project" value="WormBase"/>
</dbReference>
<dbReference type="GO" id="GO:0007004">
    <property type="term" value="P:telomere maintenance via telomerase"/>
    <property type="evidence" value="ECO:0000315"/>
    <property type="project" value="WormBase"/>
</dbReference>
<dbReference type="CDD" id="cd00577">
    <property type="entry name" value="PCNA"/>
    <property type="match status" value="1"/>
</dbReference>
<dbReference type="FunFam" id="3.70.10.10:FF:000059">
    <property type="entry name" value="Cell cycle checkpoint protein RAD1 homolog mrt-2"/>
    <property type="match status" value="1"/>
</dbReference>
<dbReference type="Gene3D" id="3.70.10.10">
    <property type="match status" value="1"/>
</dbReference>
<dbReference type="InterPro" id="IPR003011">
    <property type="entry name" value="Cell_cycle_checkpoint_Rad1"/>
</dbReference>
<dbReference type="InterPro" id="IPR046938">
    <property type="entry name" value="DNA_clamp_sf"/>
</dbReference>
<dbReference type="InterPro" id="IPR003021">
    <property type="entry name" value="Rad1_Rec1_Rad17"/>
</dbReference>
<dbReference type="PANTHER" id="PTHR10870">
    <property type="entry name" value="CELL CYCLE CHECKPOINT PROTEIN RAD1"/>
    <property type="match status" value="1"/>
</dbReference>
<dbReference type="PANTHER" id="PTHR10870:SF0">
    <property type="entry name" value="CELL CYCLE CHECKPOINT PROTEIN RAD1"/>
    <property type="match status" value="1"/>
</dbReference>
<dbReference type="Pfam" id="PF02144">
    <property type="entry name" value="Rad1"/>
    <property type="match status" value="1"/>
</dbReference>
<dbReference type="PRINTS" id="PR01245">
    <property type="entry name" value="RAD1REC1"/>
</dbReference>
<dbReference type="PRINTS" id="PR01246">
    <property type="entry name" value="RAD1REPAIR"/>
</dbReference>
<dbReference type="SUPFAM" id="SSF55979">
    <property type="entry name" value="DNA clamp"/>
    <property type="match status" value="2"/>
</dbReference>
<gene>
    <name evidence="11" type="primary">mrt-2</name>
    <name evidence="11" type="synonym">hpr-1</name>
    <name evidence="11" type="ORF">Y41C4A.14</name>
</gene>
<feature type="chain" id="PRO_0000441108" description="Cell cycle checkpoint protein RAD1 homolog mrt-2">
    <location>
        <begin position="1"/>
        <end position="267"/>
    </location>
</feature>
<sequence length="267" mass="29910">MMELETGQCTIMELKKENVKELAQVFKTVAFKDTGTWHASEAGMKITVDDGSYQLASVFINPAFFSSFKVREEIVSMKISIKSISEFLSISENSSSSVKVSYPGMFQPVKMLVEDADGWVARGNFTTTLADQELDFEFDDAGVLATYLLKTQVLKEIIKDFDDTSRTVRIQFTKNSLCFTTFGDVGETTVSIPSRSLQMESVKCLEEVEFSYLLSLIQRMTTAFILATKLILRVDERGVLSCQFSIDHGEGNASYIEFLTVPADEEE</sequence>
<organism evidence="9">
    <name type="scientific">Caenorhabditis elegans</name>
    <dbReference type="NCBI Taxonomy" id="6239"/>
    <lineage>
        <taxon>Eukaryota</taxon>
        <taxon>Metazoa</taxon>
        <taxon>Ecdysozoa</taxon>
        <taxon>Nematoda</taxon>
        <taxon>Chromadorea</taxon>
        <taxon>Rhabditida</taxon>
        <taxon>Rhabditina</taxon>
        <taxon>Rhabditomorpha</taxon>
        <taxon>Rhabditoidea</taxon>
        <taxon>Rhabditidae</taxon>
        <taxon>Peloderinae</taxon>
        <taxon>Caenorhabditis</taxon>
    </lineage>
</organism>
<reference evidence="9" key="1">
    <citation type="journal article" date="1998" name="Genomics">
        <title>cDNA cloning and gene mapping of human homologs for Schizosaccharomyces pombe rad17, rad1, and hus1 and cloning of homologs from mouse, Caenorhabditis elegans, and Drosophila melanogaster.</title>
        <authorList>
            <person name="Dean F.B."/>
            <person name="Lian L."/>
            <person name="O'Donnell M."/>
        </authorList>
    </citation>
    <scope>NUCLEOTIDE SEQUENCE [MRNA]</scope>
</reference>
<reference evidence="10" key="2">
    <citation type="journal article" date="1998" name="Science">
        <title>Genome sequence of the nematode C. elegans: a platform for investigating biology.</title>
        <authorList>
            <consortium name="The C. elegans sequencing consortium"/>
        </authorList>
    </citation>
    <scope>NUCLEOTIDE SEQUENCE [LARGE SCALE GENOMIC DNA]</scope>
    <source>
        <strain evidence="10">Bristol N2</strain>
    </source>
</reference>
<reference evidence="7" key="3">
    <citation type="journal article" date="2000" name="Mol. Cell">
        <title>A conserved checkpoint pathway mediates DNA damage-induced apoptosis and cell cycle arrest in C. elegans.</title>
        <authorList>
            <person name="Gartner A."/>
            <person name="Milstein S."/>
            <person name="Ahmed S."/>
            <person name="Hodgkin J."/>
            <person name="Hengartner M.O."/>
        </authorList>
    </citation>
    <scope>FUNCTION</scope>
</reference>
<reference evidence="7" key="4">
    <citation type="journal article" date="2000" name="Nature">
        <title>MRT-2 checkpoint protein is required for germline immortality and telomere replication in C. elegans.</title>
        <authorList>
            <person name="Ahmed S."/>
            <person name="Hodgkin J."/>
        </authorList>
    </citation>
    <scope>FUNCTION</scope>
</reference>
<reference evidence="7" key="5">
    <citation type="journal article" date="2002" name="Curr. Biol.">
        <title>Caenorhabditis elegans HUS-1 is a DNA damage checkpoint protein required for genome stability and EGL-1-mediated apoptosis.</title>
        <authorList>
            <person name="Hofmann E.R."/>
            <person name="Milstein S."/>
            <person name="Boulton S.J."/>
            <person name="Ye M."/>
            <person name="Hofmann J.J."/>
            <person name="Stergiou L."/>
            <person name="Gartner A."/>
            <person name="Vidal M."/>
            <person name="Hengartner M.O."/>
        </authorList>
    </citation>
    <scope>FUNCTION</scope>
    <scope>IDENTIFICATION IN THE 9-1-1 COMPLEX</scope>
    <scope>INTERACTION WITH HUS-1</scope>
    <scope>DISRUPTION PHENOTYPE</scope>
</reference>
<reference evidence="7" key="6">
    <citation type="journal article" date="2006" name="Genetics">
        <title>Mutator phenotype of Caenorhabditis elegans DNA damage checkpoint mutants.</title>
        <authorList>
            <person name="Harris J."/>
            <person name="Lowden M."/>
            <person name="Clejan I."/>
            <person name="Tzoneva M."/>
            <person name="Thomas J.H."/>
            <person name="Hodgkin J."/>
            <person name="Ahmed S."/>
        </authorList>
    </citation>
    <scope>FUNCTION</scope>
</reference>
<reference key="7">
    <citation type="journal article" date="2012" name="Proc. Natl. Acad. Sci. U.S.A.">
        <title>Caenorhabditis elegans POT-2 telomere protein represses a mode of alternative lengthening of telomeres with normal telomere lengths.</title>
        <authorList>
            <person name="Cheng C."/>
            <person name="Shtessel L."/>
            <person name="Brady M.M."/>
            <person name="Ahmed S."/>
        </authorList>
    </citation>
    <scope>FUNCTION</scope>
</reference>
<protein>
    <recommendedName>
        <fullName evidence="7">Cell cycle checkpoint protein RAD1 homolog mrt-2</fullName>
        <ecNumber evidence="1">3.1.11.2</ecNumber>
    </recommendedName>
</protein>
<accession>G5EC44</accession>
<comment type="function">
    <text evidence="1 2 3 4 5 6">May be a component of the 9-1-1 cell-cycle checkpoint response complex that plays a major role in DNA repair (PubMed:12445383, PubMed:16951081). Promotes DNA double strand break-induced cell cycle arrest and apoptosis, thereby playing a role in genome stability (PubMed:10646593, PubMed:10882129, PubMed:16951081). Also required for telomere length maintenance and germline immortality (PubMed:10646593, PubMed:16951081, PubMed:22547822). May possess 3'-&gt;5' double stranded DNA exonuclease activity (By similarity).</text>
</comment>
<comment type="catalytic activity">
    <reaction evidence="1">
        <text>Exonucleolytic cleavage in the 3'- to 5'-direction to yield nucleoside 5'-phosphates.</text>
        <dbReference type="EC" id="3.1.11.2"/>
    </reaction>
</comment>
<comment type="subunit">
    <text evidence="4 8">Probable component of the toroidal 9-1-1 (RAD9-RAD1-HUS1) complex, composed of hpr-9, mrt-2 and hus-1 (PubMed:12445383). Interacts with hus-1 (PubMed:12445383). Might associate with hpr-9 (Probable).</text>
</comment>
<comment type="interaction">
    <interactant intactId="EBI-323732">
        <id>G5EC44</id>
    </interactant>
    <interactant intactId="EBI-323706">
        <id>G5EFI9</id>
        <label>hus-1</label>
    </interactant>
    <organismsDiffer>false</organismsDiffer>
    <experiments>8</experiments>
</comment>
<comment type="interaction">
    <interactant intactId="EBI-323732">
        <id>G5EC44</id>
    </interactant>
    <interactant intactId="EBI-318162">
        <id>O02115</id>
        <label>pcn-1</label>
    </interactant>
    <organismsDiffer>false</organismsDiffer>
    <experiments>3</experiments>
</comment>
<comment type="subcellular location">
    <subcellularLocation>
        <location evidence="7">Nucleus</location>
    </subcellularLocation>
</comment>
<comment type="disruption phenotype">
    <text evidence="4">RNAi-mediated knockdown disrupts hus-1 localization to the nucleus.</text>
</comment>
<comment type="similarity">
    <text evidence="7">Belongs to the Rad1 family.</text>
</comment>
<evidence type="ECO:0000250" key="1">
    <source>
        <dbReference type="UniProtKB" id="O60671"/>
    </source>
</evidence>
<evidence type="ECO:0000269" key="2">
    <source>
    </source>
</evidence>
<evidence type="ECO:0000269" key="3">
    <source>
    </source>
</evidence>
<evidence type="ECO:0000269" key="4">
    <source>
    </source>
</evidence>
<evidence type="ECO:0000269" key="5">
    <source>
    </source>
</evidence>
<evidence type="ECO:0000269" key="6">
    <source>
    </source>
</evidence>
<evidence type="ECO:0000305" key="7"/>
<evidence type="ECO:0000305" key="8">
    <source>
    </source>
</evidence>
<evidence type="ECO:0000312" key="9">
    <source>
        <dbReference type="EMBL" id="AAC95525.1"/>
    </source>
</evidence>
<evidence type="ECO:0000312" key="10">
    <source>
        <dbReference type="Proteomes" id="UP000001940"/>
    </source>
</evidence>
<evidence type="ECO:0000312" key="11">
    <source>
        <dbReference type="WormBase" id="Y41C4A.14"/>
    </source>
</evidence>